<sequence>MGSSGSKSTTATTTSHSSTTTTSSTTSTTTPTTTSTTSTTSTKVTTSPEIIVSSSSTLVSSVVPEFTSSSSLSSDTIASILSSESLVSIFSSLSYTSSDISSTSVNDVESSTSGPSNSYSALSSTNAQLSSSTTETDSISSSAIQTSSPQTSSSNGGGSSSEPLGKSSVLETTASSSDTTAVTSSTFTTLTDVSSSPKISSSGSAVTSVGTTSDASKEVFSSSTSDVSSLLSSTSSPASSTISETLPFSSTILSITSSPVSSEAPSATSSVISSEASWATSSSVSSEAPLATSSVVSSEAPSSTSSVVSSEAPSSTSSSVSSEISSTTSSSVSSEAPLATSSVVSSEAPSSTSSSVSSEISSTTSSSVSSEAPLATSSVVSSEAPSSTSSSVSSEAPSSTSSSVSSEAPSSTSSSVSSEISSTKSSVMSSEVSSATSSLVSSEAPSAISSLASSRLFSSKNTSVTSTLVATEASSVTSSLRPSSETLASNSIIESSLSTGYNSTVSTTTSAASSTLGSKVSSSNSRMATSKTSSTSSDLSKSSVIFGNSSTVTTSPSASISLTASPLPSVWSDITSSEASSISSNLASSSAPSDNNSTIASASLIVTKTKNSVVSSIVSSITSSETTNESNLATSSTSLLSNKATARSLSTSNATSASNVPTGTFSSMSSHTSVITPGFSTSSASLAINSTVVSSSLAGYSFSTPESSPTTSTLVTSEAPSTVSSMTTSAPFINNSTSARPSPSTASFITESTSSISSVPLASGDVTSSLAAHNLTTFSAPSTSSAQLVSKSTTSSSILVTPRIDRSGNSSTASRIATSLPNKTTFVSSLSSTSAHARNIFNSTVLATAKQIETLTSTVNCSNPTPNYNITKTVIVSRETTAIGTVTSCSGGCTKNRKSTTLITITDIDASTVTTCPEKEVTSTTSGDEAEHTTSTKISNFETSTFSESFKDMKTSQETKKAKPGSETVRSSSSFVEKTSPTTKASPSTSPSESKAAGNTSVATNASPSTSPSESQGTGSTSVEGAKSKSTKNSEGVSTTKAKNTSTVAKSSTESPIGRGETTLETIIVSSQKSLLTSQLSSSTEKVNRSTTKPTAAIHGTSSSAKQSTTYTVSTAKENTGASLNINMKAFVIGAIALVA</sequence>
<evidence type="ECO:0000256" key="1">
    <source>
        <dbReference type="SAM" id="MobiDB-lite"/>
    </source>
</evidence>
<evidence type="ECO:0000305" key="2"/>
<comment type="domain">
    <text>Contains many Ser/Thr-rich domain and repeats.</text>
</comment>
<protein>
    <recommendedName>
        <fullName>Uncharacterized protein YMR317W</fullName>
    </recommendedName>
</protein>
<gene>
    <name type="ordered locus">YMR317W</name>
    <name type="ORF">YM9924.09</name>
</gene>
<organism>
    <name type="scientific">Saccharomyces cerevisiae (strain ATCC 204508 / S288c)</name>
    <name type="common">Baker's yeast</name>
    <dbReference type="NCBI Taxonomy" id="559292"/>
    <lineage>
        <taxon>Eukaryota</taxon>
        <taxon>Fungi</taxon>
        <taxon>Dikarya</taxon>
        <taxon>Ascomycota</taxon>
        <taxon>Saccharomycotina</taxon>
        <taxon>Saccharomycetes</taxon>
        <taxon>Saccharomycetales</taxon>
        <taxon>Saccharomycetaceae</taxon>
        <taxon>Saccharomyces</taxon>
    </lineage>
</organism>
<proteinExistence type="predicted"/>
<feature type="chain" id="PRO_0000203359" description="Uncharacterized protein YMR317W">
    <location>
        <begin position="1"/>
        <end position="1140"/>
    </location>
</feature>
<feature type="region of interest" description="Disordered" evidence="1">
    <location>
        <begin position="1"/>
        <end position="49"/>
    </location>
</feature>
<feature type="region of interest" description="Disordered" evidence="1">
    <location>
        <begin position="97"/>
        <end position="243"/>
    </location>
</feature>
<feature type="region of interest" description="Disordered" evidence="1">
    <location>
        <begin position="280"/>
        <end position="427"/>
    </location>
</feature>
<feature type="region of interest" description="Disordered" evidence="1">
    <location>
        <begin position="512"/>
        <end position="541"/>
    </location>
</feature>
<feature type="region of interest" description="Disordered" evidence="1">
    <location>
        <begin position="702"/>
        <end position="747"/>
    </location>
</feature>
<feature type="region of interest" description="Disordered" evidence="1">
    <location>
        <begin position="916"/>
        <end position="1059"/>
    </location>
</feature>
<feature type="region of interest" description="Disordered" evidence="1">
    <location>
        <begin position="1080"/>
        <end position="1103"/>
    </location>
</feature>
<feature type="compositionally biased region" description="Polar residues" evidence="1">
    <location>
        <begin position="105"/>
        <end position="129"/>
    </location>
</feature>
<feature type="compositionally biased region" description="Low complexity" evidence="1">
    <location>
        <begin position="130"/>
        <end position="154"/>
    </location>
</feature>
<feature type="compositionally biased region" description="Low complexity" evidence="1">
    <location>
        <begin position="172"/>
        <end position="214"/>
    </location>
</feature>
<feature type="compositionally biased region" description="Low complexity" evidence="1">
    <location>
        <begin position="221"/>
        <end position="243"/>
    </location>
</feature>
<feature type="compositionally biased region" description="Polar residues" evidence="1">
    <location>
        <begin position="516"/>
        <end position="528"/>
    </location>
</feature>
<feature type="compositionally biased region" description="Low complexity" evidence="1">
    <location>
        <begin position="529"/>
        <end position="541"/>
    </location>
</feature>
<feature type="compositionally biased region" description="Low complexity" evidence="1">
    <location>
        <begin position="703"/>
        <end position="718"/>
    </location>
</feature>
<feature type="compositionally biased region" description="Polar residues" evidence="1">
    <location>
        <begin position="719"/>
        <end position="733"/>
    </location>
</feature>
<feature type="compositionally biased region" description="Low complexity" evidence="1">
    <location>
        <begin position="734"/>
        <end position="747"/>
    </location>
</feature>
<feature type="compositionally biased region" description="Basic and acidic residues" evidence="1">
    <location>
        <begin position="949"/>
        <end position="961"/>
    </location>
</feature>
<feature type="compositionally biased region" description="Low complexity" evidence="1">
    <location>
        <begin position="977"/>
        <end position="997"/>
    </location>
</feature>
<feature type="compositionally biased region" description="Polar residues" evidence="1">
    <location>
        <begin position="998"/>
        <end position="1023"/>
    </location>
</feature>
<feature type="compositionally biased region" description="Polar residues" evidence="1">
    <location>
        <begin position="1031"/>
        <end position="1055"/>
    </location>
</feature>
<feature type="compositionally biased region" description="Polar residues" evidence="1">
    <location>
        <begin position="1089"/>
        <end position="1103"/>
    </location>
</feature>
<feature type="sequence conflict" description="In Ref. 1; CAA90835." evidence="2" ref="1">
    <original>VI</original>
    <variation>SV</variation>
    <location>
        <begin position="271"/>
        <end position="272"/>
    </location>
</feature>
<feature type="sequence conflict" description="In Ref. 1; CAA90835." evidence="2" ref="1">
    <original>WA</original>
    <variation>SS</variation>
    <location>
        <begin position="278"/>
        <end position="279"/>
    </location>
</feature>
<reference key="1">
    <citation type="journal article" date="1997" name="Nature">
        <title>The nucleotide sequence of Saccharomyces cerevisiae chromosome XIII.</title>
        <authorList>
            <person name="Bowman S."/>
            <person name="Churcher C.M."/>
            <person name="Badcock K."/>
            <person name="Brown D."/>
            <person name="Chillingworth T."/>
            <person name="Connor R."/>
            <person name="Dedman K."/>
            <person name="Devlin K."/>
            <person name="Gentles S."/>
            <person name="Hamlin N."/>
            <person name="Hunt S."/>
            <person name="Jagels K."/>
            <person name="Lye G."/>
            <person name="Moule S."/>
            <person name="Odell C."/>
            <person name="Pearson D."/>
            <person name="Rajandream M.A."/>
            <person name="Rice P."/>
            <person name="Skelton J."/>
            <person name="Walsh S.V."/>
            <person name="Whitehead S."/>
            <person name="Barrell B.G."/>
        </authorList>
    </citation>
    <scope>NUCLEOTIDE SEQUENCE [LARGE SCALE GENOMIC DNA]</scope>
    <source>
        <strain>ATCC 204508 / S288c</strain>
    </source>
</reference>
<reference key="2">
    <citation type="journal article" date="2014" name="G3 (Bethesda)">
        <title>The reference genome sequence of Saccharomyces cerevisiae: Then and now.</title>
        <authorList>
            <person name="Engel S.R."/>
            <person name="Dietrich F.S."/>
            <person name="Fisk D.G."/>
            <person name="Binkley G."/>
            <person name="Balakrishnan R."/>
            <person name="Costanzo M.C."/>
            <person name="Dwight S.S."/>
            <person name="Hitz B.C."/>
            <person name="Karra K."/>
            <person name="Nash R.S."/>
            <person name="Weng S."/>
            <person name="Wong E.D."/>
            <person name="Lloyd P."/>
            <person name="Skrzypek M.S."/>
            <person name="Miyasato S.R."/>
            <person name="Simison M."/>
            <person name="Cherry J.M."/>
        </authorList>
    </citation>
    <scope>GENOME REANNOTATION</scope>
    <scope>SEQUENCE REVISION TO 271-272 AND 278-279</scope>
    <source>
        <strain>ATCC 204508 / S288c</strain>
    </source>
</reference>
<dbReference type="EMBL" id="Z54141">
    <property type="protein sequence ID" value="CAA90835.1"/>
    <property type="molecule type" value="Genomic_DNA"/>
</dbReference>
<dbReference type="EMBL" id="BK006946">
    <property type="protein sequence ID" value="DAA10219.2"/>
    <property type="molecule type" value="Genomic_DNA"/>
</dbReference>
<dbReference type="PIR" id="S59310">
    <property type="entry name" value="S59310"/>
</dbReference>
<dbReference type="RefSeq" id="NP_014050.2">
    <property type="nucleotide sequence ID" value="NM_001182830.2"/>
</dbReference>
<dbReference type="BioGRID" id="35497">
    <property type="interactions" value="50"/>
</dbReference>
<dbReference type="DIP" id="DIP-1384N"/>
<dbReference type="FunCoup" id="Q04893">
    <property type="interactions" value="43"/>
</dbReference>
<dbReference type="IntAct" id="Q04893">
    <property type="interactions" value="2"/>
</dbReference>
<dbReference type="MINT" id="Q04893"/>
<dbReference type="STRING" id="4932.YMR317W"/>
<dbReference type="PaxDb" id="4932-YMR317W"/>
<dbReference type="EnsemblFungi" id="YMR317W_mRNA">
    <property type="protein sequence ID" value="YMR317W"/>
    <property type="gene ID" value="YMR317W"/>
</dbReference>
<dbReference type="GeneID" id="855366"/>
<dbReference type="KEGG" id="sce:YMR317W"/>
<dbReference type="AGR" id="SGD:S000004936"/>
<dbReference type="SGD" id="S000004936">
    <property type="gene designation" value="YMR317W"/>
</dbReference>
<dbReference type="VEuPathDB" id="FungiDB:YMR317W"/>
<dbReference type="GeneTree" id="ENSGT01130000282287"/>
<dbReference type="HOGENOM" id="CLU_274866_0_0_1"/>
<dbReference type="InParanoid" id="Q04893"/>
<dbReference type="OMA" id="EHTTSTK"/>
<dbReference type="OrthoDB" id="4070762at2759"/>
<dbReference type="BioCyc" id="YEAST:G3O-32982-MONOMER"/>
<dbReference type="BioGRID-ORCS" id="855366">
    <property type="hits" value="5 hits in 10 CRISPR screens"/>
</dbReference>
<dbReference type="PRO" id="PR:Q04893"/>
<dbReference type="Proteomes" id="UP000002311">
    <property type="component" value="Chromosome XIII"/>
</dbReference>
<dbReference type="RNAct" id="Q04893">
    <property type="molecule type" value="protein"/>
</dbReference>
<keyword id="KW-1185">Reference proteome</keyword>
<keyword id="KW-0677">Repeat</keyword>
<accession>Q04893</accession>
<accession>D6W0E5</accession>
<name>YM96_YEAST</name>